<accession>Q8LGB6</accession>
<accession>Q9SVY9</accession>
<name>ZED1_ARATH</name>
<dbReference type="EMBL" id="AL049660">
    <property type="protein sequence ID" value="CAB41180.1"/>
    <property type="status" value="ALT_INIT"/>
    <property type="molecule type" value="Genomic_DNA"/>
</dbReference>
<dbReference type="EMBL" id="CP002686">
    <property type="protein sequence ID" value="AEE79693.1"/>
    <property type="molecule type" value="Genomic_DNA"/>
</dbReference>
<dbReference type="EMBL" id="CP002686">
    <property type="protein sequence ID" value="AEE79694.1"/>
    <property type="molecule type" value="Genomic_DNA"/>
</dbReference>
<dbReference type="EMBL" id="AK175119">
    <property type="protein sequence ID" value="BAD42882.1"/>
    <property type="molecule type" value="mRNA"/>
</dbReference>
<dbReference type="EMBL" id="AY084360">
    <property type="protein sequence ID" value="AAM60941.1"/>
    <property type="molecule type" value="mRNA"/>
</dbReference>
<dbReference type="PIR" id="T06745">
    <property type="entry name" value="T06745"/>
</dbReference>
<dbReference type="RefSeq" id="NP_001030878.1">
    <property type="nucleotide sequence ID" value="NM_001035801.1"/>
</dbReference>
<dbReference type="RefSeq" id="NP_567053.1">
    <property type="nucleotide sequence ID" value="NM_115635.4"/>
</dbReference>
<dbReference type="SMR" id="Q8LGB6"/>
<dbReference type="FunCoup" id="Q8LGB6">
    <property type="interactions" value="199"/>
</dbReference>
<dbReference type="STRING" id="3702.Q8LGB6"/>
<dbReference type="iPTMnet" id="Q8LGB6"/>
<dbReference type="PaxDb" id="3702-AT3G57750.1"/>
<dbReference type="ProteomicsDB" id="242349"/>
<dbReference type="DNASU" id="824944"/>
<dbReference type="EnsemblPlants" id="AT3G57750.1">
    <property type="protein sequence ID" value="AT3G57750.1"/>
    <property type="gene ID" value="AT3G57750"/>
</dbReference>
<dbReference type="EnsemblPlants" id="AT3G57750.2">
    <property type="protein sequence ID" value="AT3G57750.2"/>
    <property type="gene ID" value="AT3G57750"/>
</dbReference>
<dbReference type="GeneID" id="824944"/>
<dbReference type="Gramene" id="AT3G57750.1">
    <property type="protein sequence ID" value="AT3G57750.1"/>
    <property type="gene ID" value="AT3G57750"/>
</dbReference>
<dbReference type="Gramene" id="AT3G57750.2">
    <property type="protein sequence ID" value="AT3G57750.2"/>
    <property type="gene ID" value="AT3G57750"/>
</dbReference>
<dbReference type="KEGG" id="ath:AT3G57750"/>
<dbReference type="Araport" id="AT3G57750"/>
<dbReference type="TAIR" id="AT3G57750">
    <property type="gene designation" value="ZED1"/>
</dbReference>
<dbReference type="eggNOG" id="KOG1187">
    <property type="taxonomic scope" value="Eukaryota"/>
</dbReference>
<dbReference type="HOGENOM" id="CLU_000288_21_4_1"/>
<dbReference type="InParanoid" id="Q8LGB6"/>
<dbReference type="OMA" id="KLSDFWF"/>
<dbReference type="PRO" id="PR:Q8LGB6"/>
<dbReference type="Proteomes" id="UP000006548">
    <property type="component" value="Chromosome 3"/>
</dbReference>
<dbReference type="ExpressionAtlas" id="Q8LGB6">
    <property type="expression patterns" value="baseline and differential"/>
</dbReference>
<dbReference type="GO" id="GO:0005829">
    <property type="term" value="C:cytosol"/>
    <property type="evidence" value="ECO:0000314"/>
    <property type="project" value="UniProtKB"/>
</dbReference>
<dbReference type="GO" id="GO:0005634">
    <property type="term" value="C:nucleus"/>
    <property type="evidence" value="ECO:0000314"/>
    <property type="project" value="UniProtKB"/>
</dbReference>
<dbReference type="GO" id="GO:0005886">
    <property type="term" value="C:plasma membrane"/>
    <property type="evidence" value="ECO:0000314"/>
    <property type="project" value="UniProtKB"/>
</dbReference>
<dbReference type="GO" id="GO:0005524">
    <property type="term" value="F:ATP binding"/>
    <property type="evidence" value="ECO:0007669"/>
    <property type="project" value="UniProtKB-KW"/>
</dbReference>
<dbReference type="GO" id="GO:0007166">
    <property type="term" value="P:cell surface receptor signaling pathway"/>
    <property type="evidence" value="ECO:0007669"/>
    <property type="project" value="InterPro"/>
</dbReference>
<dbReference type="GO" id="GO:0050829">
    <property type="term" value="P:defense response to Gram-negative bacterium"/>
    <property type="evidence" value="ECO:0000315"/>
    <property type="project" value="TAIR"/>
</dbReference>
<dbReference type="GO" id="GO:0040008">
    <property type="term" value="P:regulation of growth"/>
    <property type="evidence" value="ECO:0000315"/>
    <property type="project" value="UniProtKB"/>
</dbReference>
<dbReference type="GO" id="GO:0050776">
    <property type="term" value="P:regulation of immune response"/>
    <property type="evidence" value="ECO:0000315"/>
    <property type="project" value="UniProtKB"/>
</dbReference>
<dbReference type="GO" id="GO:0009266">
    <property type="term" value="P:response to temperature stimulus"/>
    <property type="evidence" value="ECO:0000315"/>
    <property type="project" value="UniProtKB"/>
</dbReference>
<dbReference type="CDD" id="cd14066">
    <property type="entry name" value="STKc_IRAK"/>
    <property type="match status" value="1"/>
</dbReference>
<dbReference type="FunFam" id="3.30.200.20:FF:000515">
    <property type="entry name" value="Inactive serine/threonine-protein kinase"/>
    <property type="match status" value="1"/>
</dbReference>
<dbReference type="FunFam" id="1.10.510.10:FF:000774">
    <property type="entry name" value="Kinase family protein"/>
    <property type="match status" value="1"/>
</dbReference>
<dbReference type="Gene3D" id="3.30.200.20">
    <property type="entry name" value="Phosphorylase Kinase, domain 1"/>
    <property type="match status" value="1"/>
</dbReference>
<dbReference type="Gene3D" id="1.10.510.10">
    <property type="entry name" value="Transferase(Phosphotransferase) domain 1"/>
    <property type="match status" value="1"/>
</dbReference>
<dbReference type="InterPro" id="IPR011009">
    <property type="entry name" value="Kinase-like_dom_sf"/>
</dbReference>
<dbReference type="InterPro" id="IPR000719">
    <property type="entry name" value="Prot_kinase_dom"/>
</dbReference>
<dbReference type="InterPro" id="IPR045274">
    <property type="entry name" value="WAK-like"/>
</dbReference>
<dbReference type="PANTHER" id="PTHR27005:SF488">
    <property type="entry name" value="NON-FUNCTIONAL PSEUDOKINASE ZED1"/>
    <property type="match status" value="1"/>
</dbReference>
<dbReference type="PANTHER" id="PTHR27005">
    <property type="entry name" value="WALL-ASSOCIATED RECEPTOR KINASE-LIKE 21"/>
    <property type="match status" value="1"/>
</dbReference>
<dbReference type="Pfam" id="PF00069">
    <property type="entry name" value="Pkinase"/>
    <property type="match status" value="1"/>
</dbReference>
<dbReference type="SUPFAM" id="SSF56112">
    <property type="entry name" value="Protein kinase-like (PK-like)"/>
    <property type="match status" value="1"/>
</dbReference>
<dbReference type="PROSITE" id="PS50011">
    <property type="entry name" value="PROTEIN_KINASE_DOM"/>
    <property type="match status" value="1"/>
</dbReference>
<evidence type="ECO:0000255" key="1">
    <source>
        <dbReference type="PROSITE-ProRule" id="PRU00159"/>
    </source>
</evidence>
<evidence type="ECO:0000269" key="2">
    <source>
    </source>
</evidence>
<evidence type="ECO:0000269" key="3">
    <source>
    </source>
</evidence>
<evidence type="ECO:0000269" key="4">
    <source>
    </source>
</evidence>
<evidence type="ECO:0000269" key="5">
    <source>
    </source>
</evidence>
<evidence type="ECO:0000269" key="6">
    <source>
    </source>
</evidence>
<evidence type="ECO:0000303" key="7">
    <source>
    </source>
</evidence>
<evidence type="ECO:0000303" key="8">
    <source>
    </source>
</evidence>
<evidence type="ECO:0000303" key="9">
    <source>
    </source>
</evidence>
<evidence type="ECO:0000303" key="10">
    <source>
    </source>
</evidence>
<evidence type="ECO:0000305" key="11"/>
<evidence type="ECO:0000312" key="12">
    <source>
        <dbReference type="Araport" id="AT3G57750"/>
    </source>
</evidence>
<sequence length="334" mass="37957">MSKNNKKKRRWDLKNGGILLEELIASFDGKTNPIRCFSSDQILKATDNFSESRIISSWGYFIWYKGVIEERQVSIKKWSSQNLSSFTEAYRDISVSSQMSGHKNALKLIGCCLEFDLPALVCEYTEHGPLNRDGGLSSGVVLPWKVRLKIAKEIASSVTYLHTAFPETIVHRNINPTNIFIDENWTAKLSDFWFCVAIPEGELYVEDDVKGVIGFVDPDYYWTMKVTEKVDIYSFGVVMLVLLSGRAAVFNGPDEAPMSLNDHVSEVMEKGEFDEIVDKEIWNDLGGDDDLVLRRSQVKAFLRLALRCVRYKKEDPVSGMLEVAKELKLIEKLS</sequence>
<gene>
    <name evidence="7" type="primary">ZED1</name>
    <name evidence="9" type="synonym">CLS</name>
    <name evidence="8" type="synonym">ZRK5</name>
    <name evidence="12" type="ordered locus">At3g57750</name>
</gene>
<feature type="chain" id="PRO_0000433373" description="Non-functional pseudokinase ZED1">
    <location>
        <begin position="1"/>
        <end position="334"/>
    </location>
</feature>
<feature type="domain" description="Protein kinase" evidence="1">
    <location>
        <begin position="49"/>
        <end position="334"/>
    </location>
</feature>
<feature type="binding site" evidence="1">
    <location>
        <begin position="55"/>
        <end position="63"/>
    </location>
    <ligand>
        <name>ATP</name>
        <dbReference type="ChEBI" id="CHEBI:30616"/>
    </ligand>
</feature>
<feature type="binding site" evidence="1">
    <location>
        <position position="76"/>
    </location>
    <ligand>
        <name>ATP</name>
        <dbReference type="ChEBI" id="CHEBI:30616"/>
    </ligand>
</feature>
<feature type="site" description="Required for Pseudomonas syringae type III effector HopZ1a recognition and interaction with ZAR1" evidence="5">
    <location>
        <position position="231"/>
    </location>
</feature>
<feature type="modified residue" description="O-acetylthreonine" evidence="2">
    <location>
        <position position="125"/>
    </location>
</feature>
<feature type="modified residue" description="O-acetylthreonine" evidence="2">
    <location>
        <position position="177"/>
    </location>
</feature>
<feature type="mutagenesis site" description="In zed1-1; loss of function and reduced interaction with RPP13L4/ZAR1 and Pseudomonas syringae type III effector HopZ1a." evidence="2 5">
    <original>G</original>
    <variation>S</variation>
    <location>
        <position position="66"/>
    </location>
</feature>
<feature type="mutagenesis site" description="In zed1-3; loss of function and reduced interaction with RPP13L4/ZAR1 and Pseudomonas syringae type III effector HopZ1a." evidence="2 5">
    <original>G</original>
    <variation>E</variation>
    <location>
        <position position="128"/>
    </location>
</feature>
<feature type="mutagenesis site" description="In zed1-D; normal growth of plants grown below 22 degrees Celsius, but high temperature (above 22 degrees Celsius)-dependent RPP13L4/ZAR1-influenced autoimmunity and growth retardation. Plants cultivated above 23 degrees Celsius are dwarf with crinkled lamina, shortened petiole, reduced pedicel length and silique numbers, increased branches, severely shortened inflorescence stem and clustered siliques. These phenotypes are associated with inhibited cell elongation and/or expansion and disturbed differentiation of trichomes and stomata, disorganized interfascicular fibers and fewer pith tissues in inflorescence stems as well as increased lignin deposition in the vasculatures. Elevated reactive oxygen species (ROS) content and extensive cell death as well as reduced expression of pathogenesis related genes (e.g. PR1 and PR2) but accumulation of SNC1 when grown at 25 degrees Celsius. The high temperature-induced autoimmune phenotype is blocked in the double mutant zed1-D zar1-3. Stronger binding activity with RPP13L4/ZAR1. Confined to the cytosol. Fully rescued by the over-expression of RKS1/ZRK1 and ZRK12, and partially by the over-expression of ZRK4, ZRK10, ZRK13 and ZRK14. The double mutants zed1-D snc1-11 and zed1-D nahG have restored normal growth phenotypes and rescued autoimmunity defects. These pleiotropic phenotypes are suppressed in plants lacking SZE1 and SZE2." evidence="4 6">
    <original>N</original>
    <variation>S</variation>
    <location>
        <position position="173"/>
    </location>
</feature>
<feature type="mutagenesis site" description="In zed1-4; loss of function, impaired interaction with RPP13L4/ZAR1 and Pseudomonas syringae type III effector HopZ1a, and completely abrogated hypersensitive response (HR)." evidence="2 5 6">
    <original>D</original>
    <variation>N</variation>
    <location>
        <position position="231"/>
    </location>
</feature>
<feature type="mutagenesis site" description="In zed1-5; loss of function and reduced interaction with RPP13L4/ZAR1 and Pseudomonas syringae type III effector HopZ1a." evidence="2 5">
    <original>A</original>
    <variation>T</variation>
    <location>
        <position position="305"/>
    </location>
</feature>
<comment type="function">
    <text evidence="2 3 4 5 6">Together with RPP13L4/ZAR1, involved in the ambient temperature (above 22 degrees Celsius)-sensitive aerial organ development (PubMed:28499073). Together with RPP13L4/ZAR1, involved in the regulation of the ambient temperature-sensitive intersection of growth and immune response in the absence of pathogens, by repressing the transcription of SNC1 (PubMed:28499073). Probable non-functional kinase required for recognition of the Pseudomonas syringae type III effector HopZ1a by RPP13L4/ZAR1 and, together with SZE1 and SZE2, to trigger subsequent defense responses (PubMed:24170858, PubMed:26355215, PubMed:28652264, PubMed:30947022). May function as a decoy to trap HopZ1a in the ZAR1 complex for recognition by the plant immune system (PubMed:24170858).</text>
</comment>
<comment type="subunit">
    <text evidence="2 3 4 5 6">Interacts with RPP13L4/ZAR1 (PubMed:24170858, PubMed:26355215, PubMed:28499073, PubMed:28652264). Component of an immune signaling complex made of, at least, SZE1, BKN2/SZE2, ZAR1 and ZED1 (PubMed:30947022). Binds directly to SZE1 at the plasma membrane (PubMed:30947022).</text>
</comment>
<comment type="subcellular location">
    <subcellularLocation>
        <location evidence="4">Cytoplasm</location>
        <location evidence="4">Cytosol</location>
    </subcellularLocation>
    <subcellularLocation>
        <location evidence="4 5">Nucleus</location>
    </subcellularLocation>
    <subcellularLocation>
        <location evidence="5">Cell membrane</location>
    </subcellularLocation>
    <text evidence="5">Associates with the plasma membrane in the presence of the Xanthomonas campestris effector XopAC/AvrAC.</text>
</comment>
<comment type="tissue specificity">
    <text evidence="4">Expressed in seedlings, young leaves, floral organs, shoot apical meristems (SAM) and inflorescence stems.</text>
</comment>
<comment type="induction">
    <text evidence="4">Induced by the elevation of ambient temperature both in the nucleus and the cytosol.</text>
</comment>
<comment type="domain">
    <text evidence="1">The protein kinase domain is predicted to be catalytically inactive.</text>
</comment>
<comment type="disruption phenotype">
    <text evidence="3 4">Reduced resistance to Pseudomonas syringae expressing HopZ1a (PubMed:26355215). The double mutant zed1-6 zrk12-1 exhibits short inflorescence stem and autoimmunity symptoms when grown at 25 degrees Celsius (PubMed:28499073).</text>
</comment>
<comment type="similarity">
    <text evidence="11">Belongs to the protein kinase superfamily. Ser/Thr protein kinase family. ZRK subfamily.</text>
</comment>
<comment type="sequence caution" evidence="11">
    <conflict type="erroneous initiation">
        <sequence resource="EMBL-CDS" id="CAB41180"/>
    </conflict>
    <text>Extended N-terminus.</text>
</comment>
<protein>
    <recommendedName>
        <fullName evidence="11">Non-functional pseudokinase ZED1</fullName>
        <shortName evidence="10">AtZED1</shortName>
    </recommendedName>
    <alternativeName>
        <fullName evidence="8">Non-functional pseudokinase ZRK5</fullName>
    </alternativeName>
    <alternativeName>
        <fullName evidence="9">Protein CLUSTERED SILIQUE</fullName>
    </alternativeName>
    <alternativeName>
        <fullName evidence="7">Protein HOPZ-ETI-DEFICIENT 1</fullName>
    </alternativeName>
</protein>
<proteinExistence type="evidence at protein level"/>
<organism>
    <name type="scientific">Arabidopsis thaliana</name>
    <name type="common">Mouse-ear cress</name>
    <dbReference type="NCBI Taxonomy" id="3702"/>
    <lineage>
        <taxon>Eukaryota</taxon>
        <taxon>Viridiplantae</taxon>
        <taxon>Streptophyta</taxon>
        <taxon>Embryophyta</taxon>
        <taxon>Tracheophyta</taxon>
        <taxon>Spermatophyta</taxon>
        <taxon>Magnoliopsida</taxon>
        <taxon>eudicotyledons</taxon>
        <taxon>Gunneridae</taxon>
        <taxon>Pentapetalae</taxon>
        <taxon>rosids</taxon>
        <taxon>malvids</taxon>
        <taxon>Brassicales</taxon>
        <taxon>Brassicaceae</taxon>
        <taxon>Camelineae</taxon>
        <taxon>Arabidopsis</taxon>
    </lineage>
</organism>
<reference key="1">
    <citation type="journal article" date="2000" name="Nature">
        <title>Sequence and analysis of chromosome 3 of the plant Arabidopsis thaliana.</title>
        <authorList>
            <person name="Salanoubat M."/>
            <person name="Lemcke K."/>
            <person name="Rieger M."/>
            <person name="Ansorge W."/>
            <person name="Unseld M."/>
            <person name="Fartmann B."/>
            <person name="Valle G."/>
            <person name="Bloecker H."/>
            <person name="Perez-Alonso M."/>
            <person name="Obermaier B."/>
            <person name="Delseny M."/>
            <person name="Boutry M."/>
            <person name="Grivell L.A."/>
            <person name="Mache R."/>
            <person name="Puigdomenech P."/>
            <person name="De Simone V."/>
            <person name="Choisne N."/>
            <person name="Artiguenave F."/>
            <person name="Robert C."/>
            <person name="Brottier P."/>
            <person name="Wincker P."/>
            <person name="Cattolico L."/>
            <person name="Weissenbach J."/>
            <person name="Saurin W."/>
            <person name="Quetier F."/>
            <person name="Schaefer M."/>
            <person name="Mueller-Auer S."/>
            <person name="Gabel C."/>
            <person name="Fuchs M."/>
            <person name="Benes V."/>
            <person name="Wurmbach E."/>
            <person name="Drzonek H."/>
            <person name="Erfle H."/>
            <person name="Jordan N."/>
            <person name="Bangert S."/>
            <person name="Wiedelmann R."/>
            <person name="Kranz H."/>
            <person name="Voss H."/>
            <person name="Holland R."/>
            <person name="Brandt P."/>
            <person name="Nyakatura G."/>
            <person name="Vezzi A."/>
            <person name="D'Angelo M."/>
            <person name="Pallavicini A."/>
            <person name="Toppo S."/>
            <person name="Simionati B."/>
            <person name="Conrad A."/>
            <person name="Hornischer K."/>
            <person name="Kauer G."/>
            <person name="Loehnert T.-H."/>
            <person name="Nordsiek G."/>
            <person name="Reichelt J."/>
            <person name="Scharfe M."/>
            <person name="Schoen O."/>
            <person name="Bargues M."/>
            <person name="Terol J."/>
            <person name="Climent J."/>
            <person name="Navarro P."/>
            <person name="Collado C."/>
            <person name="Perez-Perez A."/>
            <person name="Ottenwaelder B."/>
            <person name="Duchemin D."/>
            <person name="Cooke R."/>
            <person name="Laudie M."/>
            <person name="Berger-Llauro C."/>
            <person name="Purnelle B."/>
            <person name="Masuy D."/>
            <person name="de Haan M."/>
            <person name="Maarse A.C."/>
            <person name="Alcaraz J.-P."/>
            <person name="Cottet A."/>
            <person name="Casacuberta E."/>
            <person name="Monfort A."/>
            <person name="Argiriou A."/>
            <person name="Flores M."/>
            <person name="Liguori R."/>
            <person name="Vitale D."/>
            <person name="Mannhaupt G."/>
            <person name="Haase D."/>
            <person name="Schoof H."/>
            <person name="Rudd S."/>
            <person name="Zaccaria P."/>
            <person name="Mewes H.-W."/>
            <person name="Mayer K.F.X."/>
            <person name="Kaul S."/>
            <person name="Town C.D."/>
            <person name="Koo H.L."/>
            <person name="Tallon L.J."/>
            <person name="Jenkins J."/>
            <person name="Rooney T."/>
            <person name="Rizzo M."/>
            <person name="Walts A."/>
            <person name="Utterback T."/>
            <person name="Fujii C.Y."/>
            <person name="Shea T.P."/>
            <person name="Creasy T.H."/>
            <person name="Haas B."/>
            <person name="Maiti R."/>
            <person name="Wu D."/>
            <person name="Peterson J."/>
            <person name="Van Aken S."/>
            <person name="Pai G."/>
            <person name="Militscher J."/>
            <person name="Sellers P."/>
            <person name="Gill J.E."/>
            <person name="Feldblyum T.V."/>
            <person name="Preuss D."/>
            <person name="Lin X."/>
            <person name="Nierman W.C."/>
            <person name="Salzberg S.L."/>
            <person name="White O."/>
            <person name="Venter J.C."/>
            <person name="Fraser C.M."/>
            <person name="Kaneko T."/>
            <person name="Nakamura Y."/>
            <person name="Sato S."/>
            <person name="Kato T."/>
            <person name="Asamizu E."/>
            <person name="Sasamoto S."/>
            <person name="Kimura T."/>
            <person name="Idesawa K."/>
            <person name="Kawashima K."/>
            <person name="Kishida Y."/>
            <person name="Kiyokawa C."/>
            <person name="Kohara M."/>
            <person name="Matsumoto M."/>
            <person name="Matsuno A."/>
            <person name="Muraki A."/>
            <person name="Nakayama S."/>
            <person name="Nakazaki N."/>
            <person name="Shinpo S."/>
            <person name="Takeuchi C."/>
            <person name="Wada T."/>
            <person name="Watanabe A."/>
            <person name="Yamada M."/>
            <person name="Yasuda M."/>
            <person name="Tabata S."/>
        </authorList>
    </citation>
    <scope>NUCLEOTIDE SEQUENCE [LARGE SCALE GENOMIC DNA]</scope>
    <source>
        <strain>cv. Columbia</strain>
    </source>
</reference>
<reference key="2">
    <citation type="journal article" date="2017" name="Plant J.">
        <title>Araport11: a complete reannotation of the Arabidopsis thaliana reference genome.</title>
        <authorList>
            <person name="Cheng C.Y."/>
            <person name="Krishnakumar V."/>
            <person name="Chan A.P."/>
            <person name="Thibaud-Nissen F."/>
            <person name="Schobel S."/>
            <person name="Town C.D."/>
        </authorList>
    </citation>
    <scope>GENOME REANNOTATION</scope>
    <source>
        <strain>cv. Columbia</strain>
    </source>
</reference>
<reference key="3">
    <citation type="submission" date="2004-09" db="EMBL/GenBank/DDBJ databases">
        <title>Large-scale analysis of RIKEN Arabidopsis full-length (RAFL) cDNAs.</title>
        <authorList>
            <person name="Totoki Y."/>
            <person name="Seki M."/>
            <person name="Ishida J."/>
            <person name="Nakajima M."/>
            <person name="Enju A."/>
            <person name="Kamiya A."/>
            <person name="Narusaka M."/>
            <person name="Shin-i T."/>
            <person name="Nakagawa M."/>
            <person name="Sakamoto N."/>
            <person name="Oishi K."/>
            <person name="Kohara Y."/>
            <person name="Kobayashi M."/>
            <person name="Toyoda A."/>
            <person name="Sakaki Y."/>
            <person name="Sakurai T."/>
            <person name="Iida K."/>
            <person name="Akiyama K."/>
            <person name="Satou M."/>
            <person name="Toyoda T."/>
            <person name="Konagaya A."/>
            <person name="Carninci P."/>
            <person name="Kawai J."/>
            <person name="Hayashizaki Y."/>
            <person name="Shinozaki K."/>
        </authorList>
    </citation>
    <scope>NUCLEOTIDE SEQUENCE [LARGE SCALE MRNA]</scope>
    <source>
        <strain>cv. Columbia</strain>
    </source>
</reference>
<reference key="4">
    <citation type="submission" date="2002-03" db="EMBL/GenBank/DDBJ databases">
        <title>Full-length cDNA from Arabidopsis thaliana.</title>
        <authorList>
            <person name="Brover V.V."/>
            <person name="Troukhan M.E."/>
            <person name="Alexandrov N.A."/>
            <person name="Lu Y.-P."/>
            <person name="Flavell R.B."/>
            <person name="Feldmann K.A."/>
        </authorList>
    </citation>
    <scope>NUCLEOTIDE SEQUENCE [LARGE SCALE MRNA]</scope>
</reference>
<reference key="5">
    <citation type="journal article" date="2013" name="Proc. Natl. Acad. Sci. U.S.A.">
        <title>The Arabidopsis ZED1 pseudokinase is required for ZAR1-mediated immunity induced by the Pseudomonas syringae type III effector HopZ1a.</title>
        <authorList>
            <person name="Lewis J.D."/>
            <person name="Lee A.H."/>
            <person name="Hassan J.A."/>
            <person name="Wan J."/>
            <person name="Hurley B."/>
            <person name="Jhingree J.R."/>
            <person name="Wang P.W."/>
            <person name="Lo T."/>
            <person name="Youn J.Y."/>
            <person name="Guttman D.S."/>
            <person name="Desveaux D."/>
        </authorList>
    </citation>
    <scope>FUNCTION</scope>
    <scope>IDENTIFICATION BY MASS SPECTROMETRY</scope>
    <scope>INTERACTION WITH RPP13L4/ZAR1</scope>
    <scope>SUBCELLULAR LOCATION</scope>
    <scope>ACETYLATION AT THR-125 AND THR-177</scope>
    <scope>MUTAGENESIS OF GLY-66; GLY-128; ASP-231 AND ALA-305</scope>
</reference>
<reference key="6">
    <citation type="journal article" date="2015" name="Cell Host Microbe">
        <title>The decoy substrate of a pathogen effector and a pseudokinase specify pathogen-induced modified-self recognition and immunity in plants.</title>
        <authorList>
            <person name="Wang G."/>
            <person name="Roux B."/>
            <person name="Feng F."/>
            <person name="Guy E."/>
            <person name="Li L."/>
            <person name="Li N."/>
            <person name="Zhang X."/>
            <person name="Lautier M."/>
            <person name="Jardinaud M.-F."/>
            <person name="Chabannes M."/>
            <person name="Arlat M."/>
            <person name="Chen S."/>
            <person name="He C."/>
            <person name="Noel L.D."/>
            <person name="Zhou J.-M."/>
        </authorList>
    </citation>
    <scope>FUNCTION</scope>
    <scope>DISRUPTION PHENOTYPE</scope>
    <scope>INTERACTION WITH RPP13L4/ZAR1</scope>
    <scope>GENE FAMILY</scope>
    <scope>NOMENCLATURE</scope>
    <source>
        <strain>cv. Columbia</strain>
    </source>
</reference>
<reference key="7">
    <citation type="journal article" date="2017" name="New Phytol.">
        <title>Arabidopsis ZED1-related kinases mediate the temperature-sensitive intersection of immune response and growth homeostasis.</title>
        <authorList>
            <person name="Wang Z."/>
            <person name="Cui D."/>
            <person name="Liu J."/>
            <person name="Zhao J."/>
            <person name="Liu C."/>
            <person name="Xin W."/>
            <person name="Li Y."/>
            <person name="Liu N."/>
            <person name="Ren D."/>
            <person name="Tang D."/>
            <person name="Hu Y."/>
        </authorList>
    </citation>
    <scope>FUNCTION</scope>
    <scope>MUTAGENESIS OF ASN-173</scope>
    <scope>DISRUPTION PHENOTYPE</scope>
    <scope>INTERACTION WITH RPP13L4/ZAR1</scope>
    <scope>INDUCTION BY ELEVATED TEMPERATURE</scope>
    <scope>TISSUE SPECIFICITY</scope>
    <scope>SUBCELLULAR LOCATION</scope>
    <source>
        <strain>cv. Columbia</strain>
        <strain>cv. Landsberg erecta</strain>
    </source>
</reference>
<reference key="8">
    <citation type="journal article" date="2017" name="Plant Physiol.">
        <title>Analysis of the ZAR1 immune complex reveals determinants for immunity and molecular interactions.</title>
        <authorList>
            <person name="Baudin M."/>
            <person name="Hassan J.A."/>
            <person name="Schreiber K.J."/>
            <person name="Lewis J.D."/>
        </authorList>
    </citation>
    <scope>FUNCTION</scope>
    <scope>MUTAGENESIS OF GLY-66; GLY-128; ASP-231 AND ALA-305</scope>
    <scope>INTERACTION WITH RPP13L4/ZAR1</scope>
    <scope>SUBCELLULAR LOCATION</scope>
    <source>
        <strain>cv. Columbia</strain>
    </source>
</reference>
<reference key="9">
    <citation type="journal article" date="2019" name="Mol. Plant">
        <title>Two Arabidopsis receptor-like cytoplasmic kinases SZE1 and SZE2 associate with the ZAR1-ZED1 complex and are required for effector-triggered immunity.</title>
        <authorList>
            <person name="Liu C."/>
            <person name="Cui D."/>
            <person name="Zhao J."/>
            <person name="Liu N."/>
            <person name="Wang B."/>
            <person name="Liu J."/>
            <person name="Xu E."/>
            <person name="Hu Z."/>
            <person name="Ren D."/>
            <person name="Tang D."/>
            <person name="Hu Y."/>
        </authorList>
    </citation>
    <scope>FUNCTION</scope>
    <scope>MUTAGENESIS OF ASN-173 AND ASP-231</scope>
    <scope>INTERACTION WITH SZE1</scope>
    <scope>SUBUNIT</scope>
    <source>
        <strain>cv. Columbia</strain>
        <strain>cv. Landsberg erecta</strain>
    </source>
</reference>
<keyword id="KW-0007">Acetylation</keyword>
<keyword id="KW-0067">ATP-binding</keyword>
<keyword id="KW-1003">Cell membrane</keyword>
<keyword id="KW-0963">Cytoplasm</keyword>
<keyword id="KW-0472">Membrane</keyword>
<keyword id="KW-0547">Nucleotide-binding</keyword>
<keyword id="KW-0539">Nucleus</keyword>
<keyword id="KW-0611">Plant defense</keyword>
<keyword id="KW-1185">Reference proteome</keyword>